<proteinExistence type="inferred from homology"/>
<keyword id="KW-1185">Reference proteome</keyword>
<keyword id="KW-0687">Ribonucleoprotein</keyword>
<keyword id="KW-0689">Ribosomal protein</keyword>
<gene>
    <name evidence="1" type="primary">rpsU</name>
    <name type="ordered locus">Msil_2287</name>
</gene>
<evidence type="ECO:0000255" key="1">
    <source>
        <dbReference type="HAMAP-Rule" id="MF_00358"/>
    </source>
</evidence>
<evidence type="ECO:0000256" key="2">
    <source>
        <dbReference type="SAM" id="MobiDB-lite"/>
    </source>
</evidence>
<evidence type="ECO:0000305" key="3"/>
<protein>
    <recommendedName>
        <fullName evidence="1">Small ribosomal subunit protein bS21</fullName>
    </recommendedName>
    <alternativeName>
        <fullName evidence="3">30S ribosomal protein S21</fullName>
    </alternativeName>
</protein>
<feature type="chain" id="PRO_1000194299" description="Small ribosomal subunit protein bS21">
    <location>
        <begin position="1"/>
        <end position="79"/>
    </location>
</feature>
<feature type="region of interest" description="Disordered" evidence="2">
    <location>
        <begin position="59"/>
        <end position="79"/>
    </location>
</feature>
<dbReference type="EMBL" id="CP001280">
    <property type="protein sequence ID" value="ACK51219.1"/>
    <property type="molecule type" value="Genomic_DNA"/>
</dbReference>
<dbReference type="RefSeq" id="WP_012591288.1">
    <property type="nucleotide sequence ID" value="NC_011666.1"/>
</dbReference>
<dbReference type="SMR" id="B8EIA0"/>
<dbReference type="STRING" id="395965.Msil_2287"/>
<dbReference type="KEGG" id="msl:Msil_2287"/>
<dbReference type="eggNOG" id="COG0828">
    <property type="taxonomic scope" value="Bacteria"/>
</dbReference>
<dbReference type="HOGENOM" id="CLU_159258_0_1_5"/>
<dbReference type="OrthoDB" id="9811907at2"/>
<dbReference type="Proteomes" id="UP000002257">
    <property type="component" value="Chromosome"/>
</dbReference>
<dbReference type="GO" id="GO:1990904">
    <property type="term" value="C:ribonucleoprotein complex"/>
    <property type="evidence" value="ECO:0007669"/>
    <property type="project" value="UniProtKB-KW"/>
</dbReference>
<dbReference type="GO" id="GO:0005840">
    <property type="term" value="C:ribosome"/>
    <property type="evidence" value="ECO:0007669"/>
    <property type="project" value="UniProtKB-KW"/>
</dbReference>
<dbReference type="GO" id="GO:0003735">
    <property type="term" value="F:structural constituent of ribosome"/>
    <property type="evidence" value="ECO:0007669"/>
    <property type="project" value="InterPro"/>
</dbReference>
<dbReference type="GO" id="GO:0006412">
    <property type="term" value="P:translation"/>
    <property type="evidence" value="ECO:0007669"/>
    <property type="project" value="UniProtKB-UniRule"/>
</dbReference>
<dbReference type="Gene3D" id="1.20.5.1150">
    <property type="entry name" value="Ribosomal protein S8"/>
    <property type="match status" value="1"/>
</dbReference>
<dbReference type="HAMAP" id="MF_00358">
    <property type="entry name" value="Ribosomal_bS21"/>
    <property type="match status" value="1"/>
</dbReference>
<dbReference type="InterPro" id="IPR001911">
    <property type="entry name" value="Ribosomal_bS21"/>
</dbReference>
<dbReference type="InterPro" id="IPR018278">
    <property type="entry name" value="Ribosomal_bS21_CS"/>
</dbReference>
<dbReference type="InterPro" id="IPR038380">
    <property type="entry name" value="Ribosomal_bS21_sf"/>
</dbReference>
<dbReference type="NCBIfam" id="TIGR00030">
    <property type="entry name" value="S21p"/>
    <property type="match status" value="1"/>
</dbReference>
<dbReference type="PANTHER" id="PTHR21109">
    <property type="entry name" value="MITOCHONDRIAL 28S RIBOSOMAL PROTEIN S21"/>
    <property type="match status" value="1"/>
</dbReference>
<dbReference type="PANTHER" id="PTHR21109:SF0">
    <property type="entry name" value="SMALL RIBOSOMAL SUBUNIT PROTEIN BS21M"/>
    <property type="match status" value="1"/>
</dbReference>
<dbReference type="Pfam" id="PF01165">
    <property type="entry name" value="Ribosomal_S21"/>
    <property type="match status" value="1"/>
</dbReference>
<dbReference type="PRINTS" id="PR00976">
    <property type="entry name" value="RIBOSOMALS21"/>
</dbReference>
<dbReference type="PROSITE" id="PS01181">
    <property type="entry name" value="RIBOSOMAL_S21"/>
    <property type="match status" value="1"/>
</dbReference>
<sequence>MQVLVRDNNVDQALKALKKKMQREGIFREMKLRGHYEKPSEKRAREKAEAIRRARKLARKKMQREGLLPMKPKPVVGVR</sequence>
<organism>
    <name type="scientific">Methylocella silvestris (strain DSM 15510 / CIP 108128 / LMG 27833 / NCIMB 13906 / BL2)</name>
    <dbReference type="NCBI Taxonomy" id="395965"/>
    <lineage>
        <taxon>Bacteria</taxon>
        <taxon>Pseudomonadati</taxon>
        <taxon>Pseudomonadota</taxon>
        <taxon>Alphaproteobacteria</taxon>
        <taxon>Hyphomicrobiales</taxon>
        <taxon>Beijerinckiaceae</taxon>
        <taxon>Methylocella</taxon>
    </lineage>
</organism>
<reference key="1">
    <citation type="journal article" date="2010" name="J. Bacteriol.">
        <title>Complete genome sequence of the aerobic facultative methanotroph Methylocella silvestris BL2.</title>
        <authorList>
            <person name="Chen Y."/>
            <person name="Crombie A."/>
            <person name="Rahman M.T."/>
            <person name="Dedysh S.N."/>
            <person name="Liesack W."/>
            <person name="Stott M.B."/>
            <person name="Alam M."/>
            <person name="Theisen A.R."/>
            <person name="Murrell J.C."/>
            <person name="Dunfield P.F."/>
        </authorList>
    </citation>
    <scope>NUCLEOTIDE SEQUENCE [LARGE SCALE GENOMIC DNA]</scope>
    <source>
        <strain>DSM 15510 / CIP 108128 / LMG 27833 / NCIMB 13906 / BL2</strain>
    </source>
</reference>
<accession>B8EIA0</accession>
<comment type="similarity">
    <text evidence="1">Belongs to the bacterial ribosomal protein bS21 family.</text>
</comment>
<name>RS21_METSB</name>